<name>MDR1_CANAL</name>
<evidence type="ECO:0000255" key="1"/>
<evidence type="ECO:0000255" key="2">
    <source>
        <dbReference type="PROSITE-ProRule" id="PRU00498"/>
    </source>
</evidence>
<evidence type="ECO:0000256" key="3">
    <source>
        <dbReference type="SAM" id="MobiDB-lite"/>
    </source>
</evidence>
<evidence type="ECO:0000269" key="4">
    <source>
    </source>
</evidence>
<evidence type="ECO:0000269" key="5">
    <source>
    </source>
</evidence>
<evidence type="ECO:0000269" key="6">
    <source>
    </source>
</evidence>
<evidence type="ECO:0000269" key="7">
    <source>
    </source>
</evidence>
<evidence type="ECO:0000269" key="8">
    <source>
    </source>
</evidence>
<evidence type="ECO:0000269" key="9">
    <source>
    </source>
</evidence>
<evidence type="ECO:0000269" key="10">
    <source>
    </source>
</evidence>
<evidence type="ECO:0000269" key="11">
    <source>
    </source>
</evidence>
<evidence type="ECO:0000269" key="12">
    <source>
    </source>
</evidence>
<evidence type="ECO:0000269" key="13">
    <source>
    </source>
</evidence>
<evidence type="ECO:0000269" key="14">
    <source>
    </source>
</evidence>
<evidence type="ECO:0000269" key="15">
    <source>
    </source>
</evidence>
<evidence type="ECO:0000269" key="16">
    <source>
    </source>
</evidence>
<evidence type="ECO:0000269" key="17">
    <source>
    </source>
</evidence>
<evidence type="ECO:0000269" key="18">
    <source>
    </source>
</evidence>
<evidence type="ECO:0000269" key="19">
    <source>
    </source>
</evidence>
<evidence type="ECO:0000269" key="20">
    <source>
    </source>
</evidence>
<evidence type="ECO:0000269" key="21">
    <source>
    </source>
</evidence>
<evidence type="ECO:0000269" key="22">
    <source>
    </source>
</evidence>
<evidence type="ECO:0000269" key="23">
    <source>
    </source>
</evidence>
<evidence type="ECO:0000269" key="24">
    <source>
    </source>
</evidence>
<evidence type="ECO:0000269" key="25">
    <source>
    </source>
</evidence>
<evidence type="ECO:0000269" key="26">
    <source>
    </source>
</evidence>
<evidence type="ECO:0000269" key="27">
    <source>
    </source>
</evidence>
<evidence type="ECO:0000269" key="28">
    <source>
    </source>
</evidence>
<evidence type="ECO:0000269" key="29">
    <source>
    </source>
</evidence>
<evidence type="ECO:0000269" key="30">
    <source>
    </source>
</evidence>
<evidence type="ECO:0000269" key="31">
    <source>
    </source>
</evidence>
<evidence type="ECO:0000269" key="32">
    <source>
    </source>
</evidence>
<evidence type="ECO:0000269" key="33">
    <source>
    </source>
</evidence>
<evidence type="ECO:0000269" key="34">
    <source>
    </source>
</evidence>
<evidence type="ECO:0000269" key="35">
    <source>
    </source>
</evidence>
<evidence type="ECO:0000269" key="36">
    <source>
    </source>
</evidence>
<evidence type="ECO:0000269" key="37">
    <source>
    </source>
</evidence>
<evidence type="ECO:0000303" key="38">
    <source>
    </source>
</evidence>
<evidence type="ECO:0000303" key="39">
    <source>
    </source>
</evidence>
<evidence type="ECO:0000305" key="40"/>
<feature type="chain" id="PRO_0000431619" description="Multidrug resistance protein 1">
    <location>
        <begin position="1"/>
        <end position="564"/>
    </location>
</feature>
<feature type="topological domain" description="Cytoplasmic" evidence="40">
    <location>
        <begin position="1"/>
        <end position="115"/>
    </location>
</feature>
<feature type="transmembrane region" description="Helical; Name=1" evidence="1">
    <location>
        <begin position="116"/>
        <end position="136"/>
    </location>
</feature>
<feature type="topological domain" description="Extracellular" evidence="40">
    <location>
        <begin position="137"/>
        <end position="151"/>
    </location>
</feature>
<feature type="transmembrane region" description="Helical; Name=2" evidence="1">
    <location>
        <begin position="152"/>
        <end position="172"/>
    </location>
</feature>
<feature type="topological domain" description="Cytoplasmic" evidence="40">
    <location>
        <begin position="173"/>
        <end position="183"/>
    </location>
</feature>
<feature type="transmembrane region" description="Helical; Name=3" evidence="1">
    <location>
        <begin position="184"/>
        <end position="204"/>
    </location>
</feature>
<feature type="topological domain" description="Extracellular" evidence="40">
    <location>
        <begin position="205"/>
        <end position="206"/>
    </location>
</feature>
<feature type="transmembrane region" description="Helical; Name=4" evidence="1">
    <location>
        <begin position="207"/>
        <end position="227"/>
    </location>
</feature>
<feature type="topological domain" description="Cytoplasmic" evidence="40">
    <location>
        <begin position="228"/>
        <end position="242"/>
    </location>
</feature>
<feature type="transmembrane region" description="Helical; Name=5" evidence="1">
    <location>
        <begin position="243"/>
        <end position="263"/>
    </location>
</feature>
<feature type="topological domain" description="Extracellular" evidence="40">
    <location>
        <begin position="264"/>
        <end position="273"/>
    </location>
</feature>
<feature type="transmembrane region" description="Helical; Name=6" evidence="1">
    <location>
        <begin position="274"/>
        <end position="294"/>
    </location>
</feature>
<feature type="topological domain" description="Cytoplasmic" evidence="40">
    <location>
        <begin position="295"/>
        <end position="350"/>
    </location>
</feature>
<feature type="transmembrane region" description="Helical; Name=7" evidence="1">
    <location>
        <begin position="351"/>
        <end position="371"/>
    </location>
</feature>
<feature type="topological domain" description="Extracellular" evidence="40">
    <location>
        <begin position="372"/>
        <end position="390"/>
    </location>
</feature>
<feature type="transmembrane region" description="Helical; Name=8" evidence="1">
    <location>
        <begin position="391"/>
        <end position="411"/>
    </location>
</feature>
<feature type="topological domain" description="Cytoplasmic" evidence="40">
    <location>
        <begin position="412"/>
        <end position="428"/>
    </location>
</feature>
<feature type="transmembrane region" description="Helical; Name=9" evidence="1">
    <location>
        <begin position="429"/>
        <end position="449"/>
    </location>
</feature>
<feature type="topological domain" description="Extracellular" evidence="40">
    <location>
        <begin position="450"/>
        <end position="455"/>
    </location>
</feature>
<feature type="transmembrane region" description="Helical; Name=10" evidence="1">
    <location>
        <begin position="456"/>
        <end position="476"/>
    </location>
</feature>
<feature type="topological domain" description="Cytoplasmic" evidence="40">
    <location>
        <begin position="477"/>
        <end position="503"/>
    </location>
</feature>
<feature type="transmembrane region" description="Helical; Name=11" evidence="1">
    <location>
        <begin position="504"/>
        <end position="524"/>
    </location>
</feature>
<feature type="topological domain" description="Extracellular" evidence="40">
    <location>
        <begin position="525"/>
        <end position="528"/>
    </location>
</feature>
<feature type="transmembrane region" description="Helical; Name=12" evidence="1">
    <location>
        <begin position="529"/>
        <end position="549"/>
    </location>
</feature>
<feature type="topological domain" description="Cytoplasmic" evidence="40">
    <location>
        <begin position="550"/>
        <end position="564"/>
    </location>
</feature>
<feature type="region of interest" description="Disordered" evidence="3">
    <location>
        <begin position="60"/>
        <end position="101"/>
    </location>
</feature>
<feature type="compositionally biased region" description="Low complexity" evidence="3">
    <location>
        <begin position="67"/>
        <end position="86"/>
    </location>
</feature>
<feature type="glycosylation site" description="N-linked (GlcNAc...) asparagine" evidence="2">
    <location>
        <position position="453"/>
    </location>
</feature>
<feature type="mutagenesis site" description="Leads to general drug-sensitivity." evidence="25">
    <original>E</original>
    <variation>A</variation>
    <location>
        <position position="296"/>
    </location>
</feature>
<feature type="mutagenesis site" description="Leads to general drug-sensitivity." evidence="25">
    <original>K</original>
    <variation>A</variation>
    <location>
        <position position="300"/>
    </location>
</feature>
<feature type="mutagenesis site" description="Leads to general drug-sensitivity." evidence="25">
    <original>K</original>
    <variation>A</variation>
    <location>
        <position position="306"/>
    </location>
</feature>
<feature type="mutagenesis site" description="Leads to general drug-sensitivity." evidence="25">
    <original>K</original>
    <variation>A</variation>
    <location>
        <position position="308"/>
    </location>
</feature>
<feature type="mutagenesis site" description="Leads to general drug-sensitivity." evidence="25">
    <original>R</original>
    <variation>A</variation>
    <location>
        <position position="309"/>
    </location>
</feature>
<feature type="mutagenesis site" description="Leads to general drug-sensitivity." evidence="25">
    <original>D</original>
    <variation>A</variation>
    <location>
        <position position="317"/>
    </location>
</feature>
<feature type="mutagenesis site" description="Leads to general drug-sensitivity." evidence="25">
    <original>R</original>
    <variation>A</variation>
    <location>
        <position position="318"/>
    </location>
</feature>
<feature type="mutagenesis site" description="Leads to general drug-sensitivity." evidence="25">
    <original>E</original>
    <variation>A</variation>
    <location>
        <position position="322"/>
    </location>
</feature>
<feature type="mutagenesis site" description="Leads to general drug-sensitivity." evidence="25">
    <original>E</original>
    <variation>A</variation>
    <location>
        <position position="324"/>
    </location>
</feature>
<feature type="mutagenesis site" description="Leads to general drug-sensitivity." evidence="25">
    <original>E</original>
    <variation>A</variation>
    <location>
        <position position="326"/>
    </location>
</feature>
<feature type="mutagenesis site" description="Leads to general drug-sensitivity." evidence="25">
    <original>K</original>
    <variation>A</variation>
    <location>
        <position position="329"/>
    </location>
</feature>
<organism>
    <name type="scientific">Candida albicans (strain SC5314 / ATCC MYA-2876)</name>
    <name type="common">Yeast</name>
    <dbReference type="NCBI Taxonomy" id="237561"/>
    <lineage>
        <taxon>Eukaryota</taxon>
        <taxon>Fungi</taxon>
        <taxon>Dikarya</taxon>
        <taxon>Ascomycota</taxon>
        <taxon>Saccharomycotina</taxon>
        <taxon>Pichiomycetes</taxon>
        <taxon>Debaryomycetaceae</taxon>
        <taxon>Candida/Lodderomyces clade</taxon>
        <taxon>Candida</taxon>
    </lineage>
</organism>
<gene>
    <name evidence="38" type="primary">MDR1</name>
    <name type="synonym">BEN</name>
    <name type="synonym">BMR1</name>
    <name type="ordered locus">CAALFM_C603170CA</name>
    <name type="ORF">CaO19.13047</name>
    <name type="ORF">CaO19.5604</name>
</gene>
<reference key="1">
    <citation type="journal article" date="2004" name="Proc. Natl. Acad. Sci. U.S.A.">
        <title>The diploid genome sequence of Candida albicans.</title>
        <authorList>
            <person name="Jones T."/>
            <person name="Federspiel N.A."/>
            <person name="Chibana H."/>
            <person name="Dungan J."/>
            <person name="Kalman S."/>
            <person name="Magee B.B."/>
            <person name="Newport G."/>
            <person name="Thorstenson Y.R."/>
            <person name="Agabian N."/>
            <person name="Magee P.T."/>
            <person name="Davis R.W."/>
            <person name="Scherer S."/>
        </authorList>
    </citation>
    <scope>NUCLEOTIDE SEQUENCE [LARGE SCALE GENOMIC DNA]</scope>
    <source>
        <strain>SC5314 / ATCC MYA-2876</strain>
    </source>
</reference>
<reference key="2">
    <citation type="journal article" date="2007" name="Genome Biol.">
        <title>Assembly of the Candida albicans genome into sixteen supercontigs aligned on the eight chromosomes.</title>
        <authorList>
            <person name="van het Hoog M."/>
            <person name="Rast T.J."/>
            <person name="Martchenko M."/>
            <person name="Grindle S."/>
            <person name="Dignard D."/>
            <person name="Hogues H."/>
            <person name="Cuomo C."/>
            <person name="Berriman M."/>
            <person name="Scherer S."/>
            <person name="Magee B.B."/>
            <person name="Whiteway M."/>
            <person name="Chibana H."/>
            <person name="Nantel A."/>
            <person name="Magee P.T."/>
        </authorList>
    </citation>
    <scope>GENOME REANNOTATION</scope>
    <source>
        <strain>SC5314 / ATCC MYA-2876</strain>
    </source>
</reference>
<reference key="3">
    <citation type="journal article" date="2013" name="Genome Biol.">
        <title>Assembly of a phased diploid Candida albicans genome facilitates allele-specific measurements and provides a simple model for repeat and indel structure.</title>
        <authorList>
            <person name="Muzzey D."/>
            <person name="Schwartz K."/>
            <person name="Weissman J.S."/>
            <person name="Sherlock G."/>
        </authorList>
    </citation>
    <scope>NUCLEOTIDE SEQUENCE [LARGE SCALE GENOMIC DNA]</scope>
    <scope>GENOME REANNOTATION</scope>
    <source>
        <strain>SC5314 / ATCC MYA-2876</strain>
    </source>
</reference>
<reference key="4">
    <citation type="journal article" date="1991" name="Mol. Gen. Genet.">
        <title>Analysis of a Candida albicans gene that encodes a novel mechanism for resistance to benomyl and methotrexate.</title>
        <authorList>
            <person name="Fling M.E."/>
            <person name="Kopf J."/>
            <person name="Tamarkin A."/>
            <person name="Gorman J.A."/>
            <person name="Smith H.A."/>
            <person name="Koltin Y."/>
        </authorList>
    </citation>
    <scope>FUNCTION</scope>
</reference>
<reference key="5">
    <citation type="journal article" date="1994" name="Antimicrob. Agents Chemother.">
        <title>Candida albicans gene encoding resistance to benomyl and methotrexate is a multidrug resistance gene.</title>
        <authorList>
            <person name="Ben-Yaacov R."/>
            <person name="Knoller S."/>
            <person name="Caldwell G.A."/>
            <person name="Becker J.M."/>
            <person name="Koltin Y."/>
        </authorList>
    </citation>
    <scope>FUNCTION</scope>
</reference>
<reference key="6">
    <citation type="journal article" date="1995" name="Antimicrob. Agents Chemother.">
        <title>Multidrug resistance in Candida albicans: disruption of the BENr gene.</title>
        <authorList>
            <person name="Goldway M."/>
            <person name="Teff D."/>
            <person name="Schmidt R."/>
            <person name="Oppenheim A.B."/>
            <person name="Koltin Y."/>
        </authorList>
    </citation>
    <scope>DISRUPTION PHENOTYPE</scope>
    <scope>FUNCTION</scope>
</reference>
<reference key="7">
    <citation type="journal article" date="1996" name="Antimicrob. Agents Chemother.">
        <title>Susceptibilities of Candida albicans multidrug transporter mutants to various antifungal agents and other metabolic inhibitors.</title>
        <authorList>
            <person name="Sanglard D."/>
            <person name="Ischer F."/>
            <person name="Monod M."/>
            <person name="Bille J."/>
        </authorList>
    </citation>
    <scope>DISRUPTION PHENOTYPE</scope>
    <scope>FUNCTION</scope>
</reference>
<reference key="8">
    <citation type="journal article" date="1997" name="Antimicrob. Agents Chemother.">
        <title>Increased mRNA levels of ERG16, CDR, and MDR1 correlate with increases in azole resistance in Candida albicans isolates from a patient infected with human immunodeficiency virus.</title>
        <authorList>
            <person name="White T.C."/>
        </authorList>
    </citation>
    <scope>FUNCTION</scope>
</reference>
<reference key="9">
    <citation type="journal article" date="1997" name="Yeast">
        <title>Multidrug-resistant transport proteins in yeast: complete inventory and phylogenetic characterization of yeast open reading frames with the major facilitator superfamily.</title>
        <authorList>
            <person name="Goffeau A."/>
            <person name="Park J."/>
            <person name="Paulsen I.T."/>
            <person name="Jonniaux J.L."/>
            <person name="Dinh T."/>
            <person name="Mordant P."/>
            <person name="Saier M.H. Jr."/>
        </authorList>
    </citation>
    <scope>IDENTIFICATION</scope>
</reference>
<reference key="10">
    <citation type="journal article" date="1998" name="Antimicrob. Agents Chemother.">
        <title>Rapid, transient fluconazole resistance in Candida albicans is associated with increased mRNA levels of CDR.</title>
        <authorList>
            <person name="Marr K.A."/>
            <person name="Lyons C.N."/>
            <person name="Rustad T.R."/>
            <person name="Bowden R.A."/>
            <person name="White T.C."/>
            <person name="Rustad T."/>
        </authorList>
    </citation>
    <scope>FUNCTION</scope>
</reference>
<reference key="11">
    <citation type="journal article" date="1998" name="Antimicrob. Agents Chemother.">
        <title>Distinct patterns of gene expression associated with development of fluconazole resistance in serial candida albicans isolates from human immunodeficiency virus-infected patients with oropharyngeal candidiasis.</title>
        <authorList>
            <person name="Lopez-Ribot J.L."/>
            <person name="McAtee R.K."/>
            <person name="Lee L.N."/>
            <person name="Kirkpatrick W.R."/>
            <person name="White T.C."/>
            <person name="Sanglard D."/>
            <person name="Patterson T.F."/>
        </authorList>
    </citation>
    <scope>FUNCTION</scope>
</reference>
<reference key="12">
    <citation type="journal article" date="1999" name="J. Bacteriol.">
        <title>The bZip transcription factor Cap1p is involved in multidrug resistance and oxidative stress response in Candida albicans.</title>
        <authorList>
            <person name="Alarco A.M."/>
            <person name="Raymond M."/>
        </authorList>
    </citation>
    <scope>INDUCTION</scope>
</reference>
<reference key="13">
    <citation type="journal article" date="2000" name="Mol. Microbiol.">
        <title>Targeted gene disruption in Candida albicans wild-type strains: the role of the MDR1 gene in fluconazole resistance of clinical Candida albicans isolates.</title>
        <authorList>
            <person name="Wirsching S."/>
            <person name="Michel S."/>
            <person name="Morschhauser J."/>
        </authorList>
    </citation>
    <scope>DISRUPTION PHENOTYPE</scope>
    <scope>FUNCTION</scope>
</reference>
<reference key="14">
    <citation type="journal article" date="2001" name="J. Biosci.">
        <title>Specificity of drug transport mediated by CaMDR1: a major facilitator of Candida albicans.</title>
        <authorList>
            <person name="Kohli A."/>
            <person name="Gupta V."/>
            <person name="Krishnamurthy S."/>
            <person name="Hasnain S.E."/>
            <person name="Prasad R."/>
        </authorList>
    </citation>
    <scope>FUNCTION</scope>
</reference>
<reference key="15">
    <citation type="journal article" date="2004" name="J. Antimicrob. Chemother.">
        <title>Drug resistance genes and trailing growth in Candida albicans isolates.</title>
        <authorList>
            <person name="Lee M.K."/>
            <person name="Williams L.E."/>
            <person name="Warnock D.W."/>
            <person name="Arthington-Skaggs B.A."/>
        </authorList>
    </citation>
    <scope>INDUCTION</scope>
</reference>
<reference key="16">
    <citation type="journal article" date="2005" name="Antimicrob. Agents Chemother.">
        <title>Drug-induced regulation of the MDR1 promoter in Candida albicans.</title>
        <authorList>
            <person name="Harry J.B."/>
            <person name="Oliver B.G."/>
            <person name="Song J.L."/>
            <person name="Silver P.M."/>
            <person name="Little J.T."/>
            <person name="Choiniere J."/>
            <person name="White T.C."/>
        </authorList>
    </citation>
    <scope>INDUCTION</scope>
</reference>
<reference key="17">
    <citation type="journal article" date="2006" name="Antimicrob. Agents Chemother.">
        <title>Overexpression of the MDR1 gene is sufficient to confer increased resistance to toxic compounds in Candida albicans.</title>
        <authorList>
            <person name="Hiller D."/>
            <person name="Sanglard D."/>
            <person name="Morschhaeuser J."/>
        </authorList>
    </citation>
    <scope>FUNCTION</scope>
</reference>
<reference key="18">
    <citation type="journal article" date="2006" name="Antimicrob. Agents Chemother.">
        <title>Multiple cis-acting sequences mediate upregulation of the MDR1 efflux pump in a fluconazole-resistant clinical Candida albicans isolate.</title>
        <authorList>
            <person name="Hiller D."/>
            <person name="Stahl S."/>
            <person name="Morschhaeuser J."/>
        </authorList>
    </citation>
    <scope>INDUCTION</scope>
</reference>
<reference key="19">
    <citation type="journal article" date="2006" name="Eukaryot. Cell">
        <title>Transcriptional regulation of MDR1, encoding a drug efflux determinant, in fluconazole-resistant Candida albicans strains through an Mcm1p binding site.</title>
        <authorList>
            <person name="Riggle P.J."/>
            <person name="Kumamoto C.A."/>
        </authorList>
    </citation>
    <scope>INDUCTION</scope>
</reference>
<reference key="20">
    <citation type="journal article" date="2006" name="Microbiology">
        <title>Identification of promoter elements responsible for the regulation of MDR1 from Candida albicans, a major facilitator transporter involved in azole resistance.</title>
        <authorList>
            <person name="Rognon B."/>
            <person name="Kozovska Z."/>
            <person name="Coste A.T."/>
            <person name="Pardini G."/>
            <person name="Sanglard D."/>
        </authorList>
    </citation>
    <scope>INDUCTION</scope>
</reference>
<reference key="21">
    <citation type="journal article" date="2007" name="Antimicrob. Agents Chemother.">
        <title>A Candida albicans petite mutant strain with uncoupled oxidative phosphorylation overexpresses MDR1 and has diminished susceptibility to fluconazole and voriconazole.</title>
        <authorList>
            <person name="Cheng S."/>
            <person name="Clancy C.J."/>
            <person name="Nguyen K.T."/>
            <person name="Clapp W."/>
            <person name="Nguyen M.H."/>
        </authorList>
    </citation>
    <scope>FUNCTION</scope>
</reference>
<reference key="22">
    <citation type="journal article" date="2007" name="PLoS Pathog.">
        <title>The transcription factor Mrr1p controls expression of the MDR1 efflux pump and mediates multidrug resistance in Candida albicans.</title>
        <authorList>
            <person name="Morschhauser J."/>
            <person name="Barker K.S."/>
            <person name="Liu T.T."/>
            <person name="Blass-Warmuth J."/>
            <person name="Homayouni R."/>
            <person name="Rogers P.D."/>
        </authorList>
    </citation>
    <scope>INDUCTION</scope>
    <scope>FUNCTION</scope>
</reference>
<reference key="23">
    <citation type="journal article" date="2008" name="J. Antimicrob. Chemother.">
        <title>Rifampicin induces MDR1 expression in Candida albicans.</title>
        <authorList>
            <person name="Vogel M."/>
            <person name="Hartmann T."/>
            <person name="Koeberle M."/>
            <person name="Treiber M."/>
            <person name="Autenrieth I.B."/>
            <person name="Schumacher U.K."/>
        </authorList>
    </citation>
    <scope>INDUCTION</scope>
</reference>
<reference key="24">
    <citation type="journal article" date="2008" name="Eukaryot. Cell">
        <title>Genomewide location analysis of Candida albicans Upc2p, a regulator of sterol metabolism and azole drug resistance.</title>
        <authorList>
            <person name="Znaidi S."/>
            <person name="Weber S."/>
            <person name="Al-Abdin O.Z."/>
            <person name="Bomme P."/>
            <person name="Saidane S."/>
            <person name="Drouin S."/>
            <person name="Lemieux S."/>
            <person name="De Deken X."/>
            <person name="Robert F."/>
            <person name="Raymond M."/>
        </authorList>
    </citation>
    <scope>INDUCTION</scope>
</reference>
<reference key="25">
    <citation type="journal article" date="2009" name="Eukaryot. Cell">
        <title>Identification of the Candida albicans Cap1p regulon.</title>
        <authorList>
            <person name="Znaidi S."/>
            <person name="Barker K.S."/>
            <person name="Weber S."/>
            <person name="Alarco A.M."/>
            <person name="Liu T.T."/>
            <person name="Boucher G."/>
            <person name="Rogers P.D."/>
            <person name="Raymond M."/>
        </authorList>
    </citation>
    <scope>INDUCTION</scope>
</reference>
<reference key="26">
    <citation type="journal article" date="2009" name="Fungal Genet. Biol.">
        <title>Rep1p negatively regulating MDR1 efflux pump involved in drug resistance in Candida albicans.</title>
        <authorList>
            <person name="Chen C.G."/>
            <person name="Yang Y.L."/>
            <person name="Tseng K.Y."/>
            <person name="Shih H.I."/>
            <person name="Liou C.H."/>
            <person name="Lin C.C."/>
            <person name="Lo H.J."/>
        </authorList>
    </citation>
    <scope>INDUCTION</scope>
</reference>
<reference key="27">
    <citation type="journal article" date="2009" name="Proteomics Clin. Appl.">
        <title>Proteomic analysis of Mrr1p- and Tac1p-associated differential protein expression in azole-resistant clinical isolates of Candida albicans.</title>
        <authorList>
            <person name="Hoehamer C.F."/>
            <person name="Cummings E.D."/>
            <person name="Hilliard G.M."/>
            <person name="Morschhaeuser J."/>
            <person name="Rogers P.D."/>
        </authorList>
    </citation>
    <scope>INDUCTION</scope>
</reference>
<reference key="28">
    <citation type="journal article" date="2009" name="Yakugaku Zasshi">
        <title>Mechanism of action of tetrandrine, a natural inhibitor of Candida albicans drug efflux pumps.</title>
        <authorList>
            <person name="Zhang H."/>
            <person name="Gao A."/>
            <person name="Li F."/>
            <person name="Zhang G."/>
            <person name="Ho H.I."/>
            <person name="Liao W."/>
        </authorList>
    </citation>
    <scope>INDUCTION</scope>
</reference>
<reference key="29">
    <citation type="journal article" date="2010" name="Eukaryot. Cell">
        <title>Fluconazole transport into Candida albicans secretory vesicles by the membrane proteins Cdr1p, Cdr2p, and Mdr1p.</title>
        <authorList>
            <person name="Basso L.R. Jr."/>
            <person name="Gast C.E."/>
            <person name="Mao Y."/>
            <person name="Wong B."/>
        </authorList>
    </citation>
    <scope>FUNCTION</scope>
</reference>
<reference key="30">
    <citation type="journal article" date="2011" name="Antimicrob. Agents Chemother.">
        <title>Differential requirement of the transcription factor Mcm1 for activation of the Candida albicans multidrug efflux pump MDR1 by its regulators Mrr1 and Cap1.</title>
        <authorList>
            <person name="Mogavero S."/>
            <person name="Tavanti A."/>
            <person name="Senesi S."/>
            <person name="Rogers P.D."/>
            <person name="Morschhaeuser J."/>
        </authorList>
    </citation>
    <scope>INDUCTION</scope>
</reference>
<reference key="31">
    <citation type="journal article" date="2011" name="Antimicrob. Agents Chemother.">
        <title>Regulation of efflux pump expression and drug resistance by the transcription factors Mrr1, Upc2, and Cap1 in Candida albicans.</title>
        <authorList>
            <person name="Schubert S."/>
            <person name="Barker K.S."/>
            <person name="Znaidi S."/>
            <person name="Schneider S."/>
            <person name="Dierolf F."/>
            <person name="Dunkel N."/>
            <person name="Aid M."/>
            <person name="Boucher G."/>
            <person name="Rogers P.D."/>
            <person name="Raymond M."/>
            <person name="Morschhaeuser J."/>
        </authorList>
    </citation>
    <scope>INDUCTION</scope>
</reference>
<reference key="32">
    <citation type="journal article" date="2011" name="Eukaryot. Cell">
        <title>Functional dissection of a Candida albicans zinc cluster transcription factor, the multidrug resistance regulator Mrr1.</title>
        <authorList>
            <person name="Schubert S."/>
            <person name="Popp C."/>
            <person name="Rogers P.D."/>
            <person name="Morschhauser J."/>
        </authorList>
    </citation>
    <scope>INDUCTION</scope>
</reference>
<reference key="33">
    <citation type="journal article" date="2012" name="Biochem. J.">
        <title>A key structural domain of the Candida albicans Mdr1 protein.</title>
        <authorList>
            <person name="Mandal A."/>
            <person name="Kumar A."/>
            <person name="Singh A."/>
            <person name="Lynn A.M."/>
            <person name="Kapoor K."/>
            <person name="Prasad R."/>
        </authorList>
    </citation>
    <scope>SUBCELLULAR LOCATION</scope>
    <scope>FUNCTION</scope>
    <scope>DOMAIN</scope>
    <scope>MUTAGENESIS OF GLU-296; LYS-300; LYS-306; LYS-308; ARG-309; ASP-317; ARG-318; GLU-322; GLU-324; GLU-326 AND LYS-329</scope>
</reference>
<reference key="34">
    <citation type="journal article" date="2012" name="Antimicrob. Agents Chemother.">
        <title>Inducible and constitutive activation of two polymorphic promoter alleles of the Candida albicans multidrug efflux pump MDR1.</title>
        <authorList>
            <person name="Sasse C."/>
            <person name="Schillig R."/>
            <person name="Reimund A."/>
            <person name="Merk J."/>
            <person name="Morschhauser J."/>
        </authorList>
    </citation>
    <scope>INDUCTION</scope>
</reference>
<reference key="35">
    <citation type="journal article" date="2013" name="Int. J. Antimicrob. Agents">
        <title>Deciphering azole resistance mechanisms with a focus on transcription factor-encoding genes TAC1, MRR1 and UPC2 in a set of fluconazole-resistant clinical isolates of Candida albicans.</title>
        <authorList>
            <person name="Morio F."/>
            <person name="Pagniez F."/>
            <person name="Besse M."/>
            <person name="Gay-andrieu F."/>
            <person name="Miegeville M."/>
            <person name="Le Pape P."/>
        </authorList>
    </citation>
    <scope>INDUCTION</scope>
</reference>
<reference key="36">
    <citation type="journal article" date="2013" name="Pharm. Biol.">
        <title>Molecular mechanisms underlying the tetrandrine-mediated reversal of the fluconazole resistance of Candida albicans.</title>
        <authorList>
            <person name="Zhang X."/>
            <person name="Guo H."/>
            <person name="Gao L."/>
            <person name="Song Y."/>
            <person name="Li S."/>
            <person name="Zhang H."/>
        </authorList>
    </citation>
    <scope>INDUCTION</scope>
</reference>
<reference key="37">
    <citation type="journal article" date="2014" name="Antimicrob. Agents Chemother.">
        <title>SAGA/ADA complex subunit Ada2 is required for Cap1- but not Mrr1-mediated upregulation of the Candida albicans multidrug efflux pump MDR1.</title>
        <authorList>
            <person name="Ramirez-Zavala B."/>
            <person name="Mogavero S."/>
            <person name="Schoeller E."/>
            <person name="Sasse C."/>
            <person name="Rogers P.D."/>
            <person name="Morschhaeuser J."/>
        </authorList>
    </citation>
    <scope>INDUCTION</scope>
</reference>
<reference key="38">
    <citation type="journal article" date="2014" name="Appl. Microbiol. Biotechnol.">
        <title>Inhibition of Candida albicans virulence factors by novel levofloxacin derivatives.</title>
        <authorList>
            <person name="Shafreen R.M."/>
            <person name="Raja Mohamed B.S."/>
            <person name="Muthamil S."/>
            <person name="Subramanian M."/>
            <person name="Pandian S.K."/>
            <person name="Shunmugiah K.P."/>
        </authorList>
    </citation>
    <scope>INDUCTION</scope>
</reference>
<dbReference type="EMBL" id="CP017628">
    <property type="protein sequence ID" value="AOW30248.1"/>
    <property type="molecule type" value="Genomic_DNA"/>
</dbReference>
<dbReference type="RefSeq" id="XP_719165.2">
    <property type="nucleotide sequence ID" value="XM_714072.2"/>
</dbReference>
<dbReference type="FunCoup" id="Q5ABU7">
    <property type="interactions" value="15"/>
</dbReference>
<dbReference type="STRING" id="237561.Q5ABU7"/>
<dbReference type="ChEMBL" id="CHEMBL5336"/>
<dbReference type="GlyCosmos" id="Q5ABU7">
    <property type="glycosylation" value="1 site, No reported glycans"/>
</dbReference>
<dbReference type="EnsemblFungi" id="C6_03170C_A-T">
    <property type="protein sequence ID" value="C6_03170C_A-T-p1"/>
    <property type="gene ID" value="C6_03170C_A"/>
</dbReference>
<dbReference type="GeneID" id="3639260"/>
<dbReference type="KEGG" id="cal:CAALFM_C603170CA"/>
<dbReference type="CGD" id="CAL0000173998">
    <property type="gene designation" value="MDR1"/>
</dbReference>
<dbReference type="VEuPathDB" id="FungiDB:C6_03170C_A"/>
<dbReference type="eggNOG" id="KOG0255">
    <property type="taxonomic scope" value="Eukaryota"/>
</dbReference>
<dbReference type="HOGENOM" id="CLU_008455_11_1_1"/>
<dbReference type="InParanoid" id="Q5ABU7"/>
<dbReference type="OrthoDB" id="3357846at2759"/>
<dbReference type="SABIO-RK" id="Q5ABU7"/>
<dbReference type="PRO" id="PR:Q5ABU7"/>
<dbReference type="Proteomes" id="UP000000559">
    <property type="component" value="Chromosome 6"/>
</dbReference>
<dbReference type="GO" id="GO:0005886">
    <property type="term" value="C:plasma membrane"/>
    <property type="evidence" value="ECO:0000314"/>
    <property type="project" value="CGD"/>
</dbReference>
<dbReference type="GO" id="GO:0015244">
    <property type="term" value="F:fluconazole transmembrane transporter activity"/>
    <property type="evidence" value="ECO:0000314"/>
    <property type="project" value="CGD"/>
</dbReference>
<dbReference type="GO" id="GO:0042910">
    <property type="term" value="F:xenobiotic transmembrane transporter activity"/>
    <property type="evidence" value="ECO:0000314"/>
    <property type="project" value="CGD"/>
</dbReference>
<dbReference type="GO" id="GO:0034599">
    <property type="term" value="P:cellular response to oxidative stress"/>
    <property type="evidence" value="ECO:0000315"/>
    <property type="project" value="CGD"/>
</dbReference>
<dbReference type="GO" id="GO:0015903">
    <property type="term" value="P:fluconazole transport"/>
    <property type="evidence" value="ECO:0000314"/>
    <property type="project" value="CGD"/>
</dbReference>
<dbReference type="GO" id="GO:0046677">
    <property type="term" value="P:response to antibiotic"/>
    <property type="evidence" value="ECO:0007669"/>
    <property type="project" value="UniProtKB-KW"/>
</dbReference>
<dbReference type="GO" id="GO:0046898">
    <property type="term" value="P:response to cycloheximide"/>
    <property type="evidence" value="ECO:0007669"/>
    <property type="project" value="UniProtKB-KW"/>
</dbReference>
<dbReference type="GO" id="GO:0009410">
    <property type="term" value="P:response to xenobiotic stimulus"/>
    <property type="evidence" value="ECO:0000314"/>
    <property type="project" value="CGD"/>
</dbReference>
<dbReference type="GO" id="GO:1990961">
    <property type="term" value="P:xenobiotic detoxification by transmembrane export across the plasma membrane"/>
    <property type="evidence" value="ECO:0000314"/>
    <property type="project" value="CGD"/>
</dbReference>
<dbReference type="CDD" id="cd17323">
    <property type="entry name" value="MFS_Tpo1_MDR_like"/>
    <property type="match status" value="1"/>
</dbReference>
<dbReference type="FunFam" id="1.20.1250.20:FF:000011">
    <property type="entry name" value="MFS multidrug transporter, putative"/>
    <property type="match status" value="1"/>
</dbReference>
<dbReference type="Gene3D" id="1.20.1250.20">
    <property type="entry name" value="MFS general substrate transporter like domains"/>
    <property type="match status" value="1"/>
</dbReference>
<dbReference type="InterPro" id="IPR011701">
    <property type="entry name" value="MFS"/>
</dbReference>
<dbReference type="InterPro" id="IPR020846">
    <property type="entry name" value="MFS_dom"/>
</dbReference>
<dbReference type="InterPro" id="IPR036259">
    <property type="entry name" value="MFS_trans_sf"/>
</dbReference>
<dbReference type="InterPro" id="IPR004734">
    <property type="entry name" value="Multidrug-R"/>
</dbReference>
<dbReference type="NCBIfam" id="TIGR00880">
    <property type="entry name" value="2_A_01_02"/>
    <property type="match status" value="1"/>
</dbReference>
<dbReference type="PANTHER" id="PTHR23502:SF23">
    <property type="entry name" value="FLUCONAZOLE RESISTANCE PROTEIN 1"/>
    <property type="match status" value="1"/>
</dbReference>
<dbReference type="PANTHER" id="PTHR23502">
    <property type="entry name" value="MAJOR FACILITATOR SUPERFAMILY"/>
    <property type="match status" value="1"/>
</dbReference>
<dbReference type="Pfam" id="PF07690">
    <property type="entry name" value="MFS_1"/>
    <property type="match status" value="1"/>
</dbReference>
<dbReference type="SUPFAM" id="SSF103473">
    <property type="entry name" value="MFS general substrate transporter"/>
    <property type="match status" value="1"/>
</dbReference>
<dbReference type="PROSITE" id="PS50850">
    <property type="entry name" value="MFS"/>
    <property type="match status" value="1"/>
</dbReference>
<protein>
    <recommendedName>
        <fullName evidence="38">Multidrug resistance protein 1</fullName>
    </recommendedName>
    <alternativeName>
        <fullName>Benomyl resistance protein 1</fullName>
    </alternativeName>
</protein>
<accession>Q5ABU7</accession>
<accession>A0A1D8PQ31</accession>
<sequence length="564" mass="62904">MHYRFLRDSFVGRVTYHLSKHKYFAHPEEAKDYIVPEKYLADYKPTLADDTSINFEKEEIDNQGEPNSSQSSSSNNTIVDNNNNNDNDVDGDKIVVTWDGDDDPENPQNWPTLQKAFFIFQISFLTTSVYMGSAVYTPGIEELMHDFGIGRVVATLPLTLFVIGYGVGPLVFSPMSENAIFGRTSIYIITLFLFVILQIPTALVNNIAGLCILRFLGGFFASPCLATGGASVADVVKFWNLPVGLAAWSLGAVCGPSFGPFFGSILTVKASWRWTFWFMCIISGFSFVMLCFTLPETFGKTLLYRKAKRLRAITGNDRITSEGEVENSKMTSHELIIDTLWRPLEITVMEPVVLLINIYIAMVYSILYLFFEVFPIYFVGVKHFTLVELGTTYMSIVIGIVIAAFIYIPVIRQKFTKPILRQEQVFPEVFIPIAIVGGILLTSGLFIFGWSANRTTHWVGPLFGAATTASGAFLIFQTLFNFMGASFKPHYIASVFASNDLFRSVIASVFPLFGAPLFDNLATPEYPVAWGSSVLGFITLVMIAIPVLFYLNGPKLRARSKYAN</sequence>
<keyword id="KW-0046">Antibiotic resistance</keyword>
<keyword id="KW-1003">Cell membrane</keyword>
<keyword id="KW-0196">Cycloheximide resistance</keyword>
<keyword id="KW-0325">Glycoprotein</keyword>
<keyword id="KW-0472">Membrane</keyword>
<keyword id="KW-1185">Reference proteome</keyword>
<keyword id="KW-0812">Transmembrane</keyword>
<keyword id="KW-1133">Transmembrane helix</keyword>
<keyword id="KW-0813">Transport</keyword>
<comment type="function">
    <text evidence="4 5 8 12 13 19 20 25 31 32 33 34 35 36 39">Plasma membrane multidrug efflux pump that confers resistance to numerous chemicals including azoles such as fluconazole, voriconazole, and benztriazoles, as well as to benomyl, cycloheximide, methotrexate, 4-nitroquinoline-N-oxide, sulfometuron methyl, cerulenin, and brefeldin A.</text>
</comment>
<comment type="subcellular location">
    <subcellularLocation>
        <location evidence="25">Cell membrane</location>
        <topology evidence="1">Multi-pass membrane protein</topology>
    </subcellularLocation>
</comment>
<comment type="induction">
    <text evidence="6 7 9 10 11 13 14 15 16 17 18 21 22 23 24 26 27 28 29 30 37">Constitutive, high-level transcription is commonly observed in laboratory and clinical strains of Candida albicans that are resistant to the antifungal drug fluconazole. Multiple cis-acting sequences within the promoter mediate its activation. One, a benomyl response element (BRE), is situated at position -296 to -260. It is required for benomyl-dependent MDR1 up-regulation and is also necessary for constitutive high expression of MDR1. A second element, termed H(2)O(2) response element (HRE), is situated at position -561 to -520. The HRE is required for H(2)O(2)-dependent MDR1 up-regulation, but dispensable for constitutive high expression. Two potential binding sites (TTAG/CTAA) for the transcription factor CAP1 lie within the HRE. Expression is induced by fluconazole, rifampicin, methotrexate, diethylmaleate, diamide, 4-nitroquinoline-N-oxide, benomyl, o-phenanthroline (OP), hydrogen peroxide, methyl methanesulfonate, and sulfometuron methyl. Expression is down-regulated by tetrandrine and levofloxacin derivatives. Transcription is positively regulated by ADA2, CAP1, MRR1, UPC2, and TAC1; and negatively regulated by REP1. Transcription is also regulated by the general transcription factor MCM1. MCM1 is dispensable for up-regulation by H(2)O(2) but is required for full induction by benomyl.</text>
</comment>
<comment type="domain">
    <text evidence="25">The central cytoplasmic loop (residues 295 to 350) is critical for the function, but unlike other homologous proteins, has no apparent role in imparting substrate specificity or in the recruitment of the transporter protein.</text>
</comment>
<comment type="disruption phenotype">
    <text evidence="4 31 33">Leads to enhanced susceptibility against fluconazole, methotrexate, 4-nitroquinoline-N-oxide, and cycloheximide.</text>
</comment>
<comment type="miscellaneous">
    <text evidence="40">The overexpression of MDR1 is a frequent cause of resistance to the widely used antimycotic agent fluconazole and other toxic compounds in the pathogenic yeast Candida albicans.</text>
</comment>
<comment type="similarity">
    <text evidence="40">Belongs to the major facilitator superfamily. CAR1 family.</text>
</comment>
<proteinExistence type="evidence at protein level"/>